<sequence length="31" mass="3458">MESFAYVLILTLAIATLFFAIAFRDPPKIGK</sequence>
<dbReference type="EMBL" id="BX569694">
    <property type="protein sequence ID" value="CAE08498.1"/>
    <property type="molecule type" value="Genomic_DNA"/>
</dbReference>
<dbReference type="RefSeq" id="WP_011128841.1">
    <property type="nucleotide sequence ID" value="NC_005070.1"/>
</dbReference>
<dbReference type="SMR" id="Q7U4T0"/>
<dbReference type="STRING" id="84588.SYNW1983"/>
<dbReference type="KEGG" id="syw:SYNW1983"/>
<dbReference type="eggNOG" id="ENOG50323KB">
    <property type="taxonomic scope" value="Bacteria"/>
</dbReference>
<dbReference type="HOGENOM" id="CLU_217078_1_0_3"/>
<dbReference type="BioCyc" id="MetaCyc:TX72_RS09985-MONOMER"/>
<dbReference type="Proteomes" id="UP000001422">
    <property type="component" value="Chromosome"/>
</dbReference>
<dbReference type="GO" id="GO:0009539">
    <property type="term" value="C:photosystem II reaction center"/>
    <property type="evidence" value="ECO:0007669"/>
    <property type="project" value="InterPro"/>
</dbReference>
<dbReference type="GO" id="GO:0031676">
    <property type="term" value="C:plasma membrane-derived thylakoid membrane"/>
    <property type="evidence" value="ECO:0007669"/>
    <property type="project" value="UniProtKB-SubCell"/>
</dbReference>
<dbReference type="GO" id="GO:0015979">
    <property type="term" value="P:photosynthesis"/>
    <property type="evidence" value="ECO:0007669"/>
    <property type="project" value="UniProtKB-UniRule"/>
</dbReference>
<dbReference type="HAMAP" id="MF_00808">
    <property type="entry name" value="PSII_PsbT"/>
    <property type="match status" value="1"/>
</dbReference>
<dbReference type="InterPro" id="IPR001743">
    <property type="entry name" value="PSII_PsbT"/>
</dbReference>
<dbReference type="InterPro" id="IPR037268">
    <property type="entry name" value="PSII_PsbT_sf"/>
</dbReference>
<dbReference type="NCBIfam" id="NF008825">
    <property type="entry name" value="PRK11875.1"/>
    <property type="match status" value="1"/>
</dbReference>
<dbReference type="Pfam" id="PF01405">
    <property type="entry name" value="PsbT"/>
    <property type="match status" value="1"/>
</dbReference>
<dbReference type="SUPFAM" id="SSF161029">
    <property type="entry name" value="Photosystem II reaction center protein T, PsbT"/>
    <property type="match status" value="1"/>
</dbReference>
<organism>
    <name type="scientific">Parasynechococcus marenigrum (strain WH8102)</name>
    <dbReference type="NCBI Taxonomy" id="84588"/>
    <lineage>
        <taxon>Bacteria</taxon>
        <taxon>Bacillati</taxon>
        <taxon>Cyanobacteriota</taxon>
        <taxon>Cyanophyceae</taxon>
        <taxon>Synechococcales</taxon>
        <taxon>Prochlorococcaceae</taxon>
        <taxon>Parasynechococcus</taxon>
        <taxon>Parasynechococcus marenigrum</taxon>
    </lineage>
</organism>
<accession>Q7U4T0</accession>
<gene>
    <name evidence="1" type="primary">psbT</name>
    <name type="ordered locus">SYNW1983</name>
</gene>
<reference key="1">
    <citation type="journal article" date="2003" name="Nature">
        <title>The genome of a motile marine Synechococcus.</title>
        <authorList>
            <person name="Palenik B."/>
            <person name="Brahamsha B."/>
            <person name="Larimer F.W."/>
            <person name="Land M.L."/>
            <person name="Hauser L."/>
            <person name="Chain P."/>
            <person name="Lamerdin J.E."/>
            <person name="Regala W."/>
            <person name="Allen E.E."/>
            <person name="McCarren J."/>
            <person name="Paulsen I.T."/>
            <person name="Dufresne A."/>
            <person name="Partensky F."/>
            <person name="Webb E.A."/>
            <person name="Waterbury J."/>
        </authorList>
    </citation>
    <scope>NUCLEOTIDE SEQUENCE [LARGE SCALE GENOMIC DNA]</scope>
    <source>
        <strain>WH8102</strain>
    </source>
</reference>
<proteinExistence type="inferred from homology"/>
<keyword id="KW-0472">Membrane</keyword>
<keyword id="KW-0602">Photosynthesis</keyword>
<keyword id="KW-0604">Photosystem II</keyword>
<keyword id="KW-0793">Thylakoid</keyword>
<keyword id="KW-0812">Transmembrane</keyword>
<keyword id="KW-1133">Transmembrane helix</keyword>
<name>PSBT_PARMW</name>
<comment type="function">
    <text evidence="1">Found at the monomer-monomer interface of the photosystem II (PS II) dimer, plays a role in assembly and dimerization of PSII. PSII is a light-driven water plastoquinone oxidoreductase, using light energy to abstract electrons from H(2)O, generating a proton gradient subsequently used for ATP formation.</text>
</comment>
<comment type="subunit">
    <text evidence="1">PSII is composed of 1 copy each of membrane proteins PsbA, PsbB, PsbC, PsbD, PsbE, PsbF, PsbH, PsbI, PsbJ, PsbK, PsbL, PsbM, PsbT, PsbX, PsbY, PsbZ, Psb30/Ycf12, peripheral proteins PsbO, CyanoQ (PsbQ), PsbU, PsbV and a large number of cofactors. It forms dimeric complexes.</text>
</comment>
<comment type="subcellular location">
    <subcellularLocation>
        <location evidence="1">Cellular thylakoid membrane</location>
        <topology evidence="1">Single-pass membrane protein</topology>
    </subcellularLocation>
</comment>
<comment type="similarity">
    <text evidence="1">Belongs to the PsbT family.</text>
</comment>
<feature type="chain" id="PRO_0000218006" description="Photosystem II reaction center protein T">
    <location>
        <begin position="1"/>
        <end position="31"/>
    </location>
</feature>
<feature type="transmembrane region" description="Helical" evidence="1">
    <location>
        <begin position="3"/>
        <end position="23"/>
    </location>
</feature>
<evidence type="ECO:0000255" key="1">
    <source>
        <dbReference type="HAMAP-Rule" id="MF_00808"/>
    </source>
</evidence>
<protein>
    <recommendedName>
        <fullName evidence="1">Photosystem II reaction center protein T</fullName>
        <shortName evidence="1">PSII-T</shortName>
    </recommendedName>
</protein>